<proteinExistence type="predicted"/>
<sequence>MEAFIIFLISSTSIPLLSNSAFELFNMIPRCSVSWTSLKKLSLRFCELSDECIAKILSGCPILESLTLSHCIYLTVLDLSKSLRLRTLEIACNIDNTRPRQIVAPHIHRLRLKTYQSPCALVDVSSLDEAQVDCFIYSHLKTLDAYLLQDILKMLEKLQNAEKLIFGCNILQILSLAEVCGLPFPMFKTKALTLETDIFQYVIPGIERLLQNSPDLKTVTVRPSDGNIMPGRCFDNYLDLQGLNPNQCWRSKDGVFWNKSRSNLGSKRVTLFVELMLKNTKILDKMVVQLNEHYLRSKLKEFVPTFSQKNNVLIVLSTTLRL</sequence>
<protein>
    <recommendedName>
        <fullName>Probable F-box protein At1g60180</fullName>
    </recommendedName>
</protein>
<gene>
    <name type="ordered locus">At1g60180</name>
    <name type="ORF">T13D8.7</name>
</gene>
<name>FB351_ARATH</name>
<keyword id="KW-1185">Reference proteome</keyword>
<feature type="chain" id="PRO_0000396067" description="Probable F-box protein At1g60180">
    <location>
        <begin position="1"/>
        <end position="322"/>
    </location>
</feature>
<feature type="domain" description="F-box">
    <location>
        <begin position="45"/>
        <end position="88"/>
    </location>
</feature>
<reference key="1">
    <citation type="journal article" date="2000" name="Nature">
        <title>Sequence and analysis of chromosome 1 of the plant Arabidopsis thaliana.</title>
        <authorList>
            <person name="Theologis A."/>
            <person name="Ecker J.R."/>
            <person name="Palm C.J."/>
            <person name="Federspiel N.A."/>
            <person name="Kaul S."/>
            <person name="White O."/>
            <person name="Alonso J."/>
            <person name="Altafi H."/>
            <person name="Araujo R."/>
            <person name="Bowman C.L."/>
            <person name="Brooks S.Y."/>
            <person name="Buehler E."/>
            <person name="Chan A."/>
            <person name="Chao Q."/>
            <person name="Chen H."/>
            <person name="Cheuk R.F."/>
            <person name="Chin C.W."/>
            <person name="Chung M.K."/>
            <person name="Conn L."/>
            <person name="Conway A.B."/>
            <person name="Conway A.R."/>
            <person name="Creasy T.H."/>
            <person name="Dewar K."/>
            <person name="Dunn P."/>
            <person name="Etgu P."/>
            <person name="Feldblyum T.V."/>
            <person name="Feng J.-D."/>
            <person name="Fong B."/>
            <person name="Fujii C.Y."/>
            <person name="Gill J.E."/>
            <person name="Goldsmith A.D."/>
            <person name="Haas B."/>
            <person name="Hansen N.F."/>
            <person name="Hughes B."/>
            <person name="Huizar L."/>
            <person name="Hunter J.L."/>
            <person name="Jenkins J."/>
            <person name="Johnson-Hopson C."/>
            <person name="Khan S."/>
            <person name="Khaykin E."/>
            <person name="Kim C.J."/>
            <person name="Koo H.L."/>
            <person name="Kremenetskaia I."/>
            <person name="Kurtz D.B."/>
            <person name="Kwan A."/>
            <person name="Lam B."/>
            <person name="Langin-Hooper S."/>
            <person name="Lee A."/>
            <person name="Lee J.M."/>
            <person name="Lenz C.A."/>
            <person name="Li J.H."/>
            <person name="Li Y.-P."/>
            <person name="Lin X."/>
            <person name="Liu S.X."/>
            <person name="Liu Z.A."/>
            <person name="Luros J.S."/>
            <person name="Maiti R."/>
            <person name="Marziali A."/>
            <person name="Militscher J."/>
            <person name="Miranda M."/>
            <person name="Nguyen M."/>
            <person name="Nierman W.C."/>
            <person name="Osborne B.I."/>
            <person name="Pai G."/>
            <person name="Peterson J."/>
            <person name="Pham P.K."/>
            <person name="Rizzo M."/>
            <person name="Rooney T."/>
            <person name="Rowley D."/>
            <person name="Sakano H."/>
            <person name="Salzberg S.L."/>
            <person name="Schwartz J.R."/>
            <person name="Shinn P."/>
            <person name="Southwick A.M."/>
            <person name="Sun H."/>
            <person name="Tallon L.J."/>
            <person name="Tambunga G."/>
            <person name="Toriumi M.J."/>
            <person name="Town C.D."/>
            <person name="Utterback T."/>
            <person name="Van Aken S."/>
            <person name="Vaysberg M."/>
            <person name="Vysotskaia V.S."/>
            <person name="Walker M."/>
            <person name="Wu D."/>
            <person name="Yu G."/>
            <person name="Fraser C.M."/>
            <person name="Venter J.C."/>
            <person name="Davis R.W."/>
        </authorList>
    </citation>
    <scope>NUCLEOTIDE SEQUENCE [LARGE SCALE GENOMIC DNA]</scope>
    <source>
        <strain>cv. Columbia</strain>
    </source>
</reference>
<reference key="2">
    <citation type="journal article" date="2017" name="Plant J.">
        <title>Araport11: a complete reannotation of the Arabidopsis thaliana reference genome.</title>
        <authorList>
            <person name="Cheng C.Y."/>
            <person name="Krishnakumar V."/>
            <person name="Chan A.P."/>
            <person name="Thibaud-Nissen F."/>
            <person name="Schobel S."/>
            <person name="Town C.D."/>
        </authorList>
    </citation>
    <scope>GENOME REANNOTATION</scope>
    <source>
        <strain>cv. Columbia</strain>
    </source>
</reference>
<organism>
    <name type="scientific">Arabidopsis thaliana</name>
    <name type="common">Mouse-ear cress</name>
    <dbReference type="NCBI Taxonomy" id="3702"/>
    <lineage>
        <taxon>Eukaryota</taxon>
        <taxon>Viridiplantae</taxon>
        <taxon>Streptophyta</taxon>
        <taxon>Embryophyta</taxon>
        <taxon>Tracheophyta</taxon>
        <taxon>Spermatophyta</taxon>
        <taxon>Magnoliopsida</taxon>
        <taxon>eudicotyledons</taxon>
        <taxon>Gunneridae</taxon>
        <taxon>Pentapetalae</taxon>
        <taxon>rosids</taxon>
        <taxon>malvids</taxon>
        <taxon>Brassicales</taxon>
        <taxon>Brassicaceae</taxon>
        <taxon>Camelineae</taxon>
        <taxon>Arabidopsis</taxon>
    </lineage>
</organism>
<dbReference type="EMBL" id="AC004473">
    <property type="protein sequence ID" value="AAC24051.1"/>
    <property type="molecule type" value="Genomic_DNA"/>
</dbReference>
<dbReference type="EMBL" id="CP002684">
    <property type="status" value="NOT_ANNOTATED_CDS"/>
    <property type="molecule type" value="Genomic_DNA"/>
</dbReference>
<dbReference type="PIR" id="T02270">
    <property type="entry name" value="T02270"/>
</dbReference>
<dbReference type="SMR" id="O80741"/>
<dbReference type="FunCoup" id="O80741">
    <property type="interactions" value="358"/>
</dbReference>
<dbReference type="Araport" id="AT1G60180"/>
<dbReference type="TAIR" id="AT1G60180"/>
<dbReference type="InParanoid" id="O80741"/>
<dbReference type="PRO" id="PR:O80741"/>
<dbReference type="Proteomes" id="UP000006548">
    <property type="component" value="Chromosome 1"/>
</dbReference>
<dbReference type="ExpressionAtlas" id="O80741">
    <property type="expression patterns" value="baseline and differential"/>
</dbReference>
<dbReference type="Gene3D" id="3.80.10.10">
    <property type="entry name" value="Ribonuclease Inhibitor"/>
    <property type="match status" value="1"/>
</dbReference>
<dbReference type="InterPro" id="IPR044997">
    <property type="entry name" value="F-box_plant"/>
</dbReference>
<dbReference type="InterPro" id="IPR032675">
    <property type="entry name" value="LRR_dom_sf"/>
</dbReference>
<dbReference type="InterPro" id="IPR055411">
    <property type="entry name" value="LRR_FXL15/At3g58940/PEG3-like"/>
</dbReference>
<dbReference type="PANTHER" id="PTHR32153">
    <property type="entry name" value="OJ000223_09.16 PROTEIN"/>
    <property type="match status" value="1"/>
</dbReference>
<dbReference type="Pfam" id="PF24758">
    <property type="entry name" value="LRR_At5g56370"/>
    <property type="match status" value="1"/>
</dbReference>
<dbReference type="SUPFAM" id="SSF52047">
    <property type="entry name" value="RNI-like"/>
    <property type="match status" value="1"/>
</dbReference>
<accession>O80741</accession>